<comment type="function">
    <text evidence="1">Component of the sulfite reductase complex that catalyzes the 6-electron reduction of sulfite to sulfide. This is one of several activities required for the biosynthesis of L-cysteine from sulfate.</text>
</comment>
<comment type="catalytic activity">
    <reaction evidence="1">
        <text>hydrogen sulfide + 3 NADP(+) + 3 H2O = sulfite + 3 NADPH + 4 H(+)</text>
        <dbReference type="Rhea" id="RHEA:13801"/>
        <dbReference type="ChEBI" id="CHEBI:15377"/>
        <dbReference type="ChEBI" id="CHEBI:15378"/>
        <dbReference type="ChEBI" id="CHEBI:17359"/>
        <dbReference type="ChEBI" id="CHEBI:29919"/>
        <dbReference type="ChEBI" id="CHEBI:57783"/>
        <dbReference type="ChEBI" id="CHEBI:58349"/>
        <dbReference type="EC" id="1.8.1.2"/>
    </reaction>
</comment>
<comment type="cofactor">
    <cofactor evidence="1">
        <name>siroheme</name>
        <dbReference type="ChEBI" id="CHEBI:60052"/>
    </cofactor>
    <text evidence="1">Binds 1 siroheme per subunit.</text>
</comment>
<comment type="cofactor">
    <cofactor evidence="1">
        <name>[4Fe-4S] cluster</name>
        <dbReference type="ChEBI" id="CHEBI:49883"/>
    </cofactor>
    <text evidence="1">Binds 1 [4Fe-4S] cluster per subunit.</text>
</comment>
<comment type="pathway">
    <text evidence="1">Sulfur metabolism; hydrogen sulfide biosynthesis; hydrogen sulfide from sulfite (NADPH route): step 1/1.</text>
</comment>
<comment type="subunit">
    <text evidence="1">Alpha(8)-beta(8). The alpha component is a flavoprotein, the beta component is a hemoprotein.</text>
</comment>
<comment type="similarity">
    <text evidence="1">Belongs to the nitrite and sulfite reductase 4Fe-4S domain family.</text>
</comment>
<proteinExistence type="inferred from homology"/>
<reference key="1">
    <citation type="journal article" date="2008" name="BMC Genomics">
        <title>The genome sequence of the fish pathogen Aliivibrio salmonicida strain LFI1238 shows extensive evidence of gene decay.</title>
        <authorList>
            <person name="Hjerde E."/>
            <person name="Lorentzen M.S."/>
            <person name="Holden M.T."/>
            <person name="Seeger K."/>
            <person name="Paulsen S."/>
            <person name="Bason N."/>
            <person name="Churcher C."/>
            <person name="Harris D."/>
            <person name="Norbertczak H."/>
            <person name="Quail M.A."/>
            <person name="Sanders S."/>
            <person name="Thurston S."/>
            <person name="Parkhill J."/>
            <person name="Willassen N.P."/>
            <person name="Thomson N.R."/>
        </authorList>
    </citation>
    <scope>NUCLEOTIDE SEQUENCE [LARGE SCALE GENOMIC DNA]</scope>
    <source>
        <strain>LFI1238</strain>
    </source>
</reference>
<sequence length="576" mass="64570">MSEQIAVKTILSGTELGPLADNERLKRESKNLRGTIVEDLQDRITGGFTNDNFQLIRFHGMYQQDDRDIRAERAKQKLEPLHNVMLRARMPGGIITPKQWLAIDKFAEENTSYGSLRLTTRQTFQFHGVLKPNIKLMHQTLNSIGIDSIATAGDVNRNVLCTTNPVESELHQEAYEWAKKISEHLLPKTRAYAEIWLDGEKLETTDEEPILGSNYLPRKFKTTVVIPPQNDVDVHANDLNFIAIANNGKLVGFNVLVGGGLAMTHGDTATYPRRADDFGFVPLEKTLEVAAAVVTTQRDWGNRSNRKNAKTKYTLDRVGVDVFKAEVEKRAGIQFEASRPYELTERGDRIGWVDGIDGKHHLALFIENGRLLDYPGKPLKTGVAEIAKIHQGDFRMTANQNLIVAGVPAEQKDQIEQIAREHGLIDDGHSEQRKNSMACVAFPTCPLAMAEAERFLPEFVTEIEGVLKKHNLPEDDNIIFRVTGCPNGCGRAMLAEIGLIGKAPGRYNFHLGGNRSGTRVPKMYKENITDRQILSEIDELVGRWATERQENEGFGDFTIRAGIVDEVKVSKRDFYA</sequence>
<gene>
    <name evidence="1" type="primary">cysI</name>
    <name type="ordered locus">VSAL_I0403</name>
</gene>
<organism>
    <name type="scientific">Aliivibrio salmonicida (strain LFI1238)</name>
    <name type="common">Vibrio salmonicida (strain LFI1238)</name>
    <dbReference type="NCBI Taxonomy" id="316275"/>
    <lineage>
        <taxon>Bacteria</taxon>
        <taxon>Pseudomonadati</taxon>
        <taxon>Pseudomonadota</taxon>
        <taxon>Gammaproteobacteria</taxon>
        <taxon>Vibrionales</taxon>
        <taxon>Vibrionaceae</taxon>
        <taxon>Aliivibrio</taxon>
    </lineage>
</organism>
<dbReference type="EC" id="1.8.1.2" evidence="1"/>
<dbReference type="EMBL" id="FM178379">
    <property type="protein sequence ID" value="CAQ78088.1"/>
    <property type="molecule type" value="Genomic_DNA"/>
</dbReference>
<dbReference type="RefSeq" id="WP_012549228.1">
    <property type="nucleotide sequence ID" value="NC_011312.1"/>
</dbReference>
<dbReference type="SMR" id="B6ELM5"/>
<dbReference type="KEGG" id="vsa:VSAL_I0403"/>
<dbReference type="eggNOG" id="COG0155">
    <property type="taxonomic scope" value="Bacteria"/>
</dbReference>
<dbReference type="HOGENOM" id="CLU_001975_3_2_6"/>
<dbReference type="UniPathway" id="UPA00140">
    <property type="reaction ID" value="UER00207"/>
</dbReference>
<dbReference type="Proteomes" id="UP000001730">
    <property type="component" value="Chromosome 1"/>
</dbReference>
<dbReference type="GO" id="GO:0009337">
    <property type="term" value="C:sulfite reductase complex (NADPH)"/>
    <property type="evidence" value="ECO:0007669"/>
    <property type="project" value="InterPro"/>
</dbReference>
<dbReference type="GO" id="GO:0051539">
    <property type="term" value="F:4 iron, 4 sulfur cluster binding"/>
    <property type="evidence" value="ECO:0007669"/>
    <property type="project" value="UniProtKB-KW"/>
</dbReference>
<dbReference type="GO" id="GO:0020037">
    <property type="term" value="F:heme binding"/>
    <property type="evidence" value="ECO:0007669"/>
    <property type="project" value="InterPro"/>
</dbReference>
<dbReference type="GO" id="GO:0046872">
    <property type="term" value="F:metal ion binding"/>
    <property type="evidence" value="ECO:0007669"/>
    <property type="project" value="UniProtKB-KW"/>
</dbReference>
<dbReference type="GO" id="GO:0050661">
    <property type="term" value="F:NADP binding"/>
    <property type="evidence" value="ECO:0007669"/>
    <property type="project" value="InterPro"/>
</dbReference>
<dbReference type="GO" id="GO:0050311">
    <property type="term" value="F:sulfite reductase (ferredoxin) activity"/>
    <property type="evidence" value="ECO:0007669"/>
    <property type="project" value="TreeGrafter"/>
</dbReference>
<dbReference type="GO" id="GO:0004783">
    <property type="term" value="F:sulfite reductase (NADPH) activity"/>
    <property type="evidence" value="ECO:0007669"/>
    <property type="project" value="UniProtKB-UniRule"/>
</dbReference>
<dbReference type="GO" id="GO:0019344">
    <property type="term" value="P:cysteine biosynthetic process"/>
    <property type="evidence" value="ECO:0007669"/>
    <property type="project" value="UniProtKB-KW"/>
</dbReference>
<dbReference type="GO" id="GO:0070814">
    <property type="term" value="P:hydrogen sulfide biosynthetic process"/>
    <property type="evidence" value="ECO:0007669"/>
    <property type="project" value="UniProtKB-UniRule"/>
</dbReference>
<dbReference type="GO" id="GO:0000103">
    <property type="term" value="P:sulfate assimilation"/>
    <property type="evidence" value="ECO:0007669"/>
    <property type="project" value="UniProtKB-UniRule"/>
</dbReference>
<dbReference type="FunFam" id="3.30.413.10:FF:000003">
    <property type="entry name" value="Sulfite reductase [NADPH] hemoprotein beta-component"/>
    <property type="match status" value="1"/>
</dbReference>
<dbReference type="FunFam" id="3.30.413.10:FF:000004">
    <property type="entry name" value="Sulfite reductase [NADPH] hemoprotein beta-component"/>
    <property type="match status" value="1"/>
</dbReference>
<dbReference type="Gene3D" id="3.30.413.10">
    <property type="entry name" value="Sulfite Reductase Hemoprotein, domain 1"/>
    <property type="match status" value="2"/>
</dbReference>
<dbReference type="HAMAP" id="MF_01540">
    <property type="entry name" value="CysI"/>
    <property type="match status" value="1"/>
</dbReference>
<dbReference type="InterPro" id="IPR011786">
    <property type="entry name" value="CysI"/>
</dbReference>
<dbReference type="InterPro" id="IPR005117">
    <property type="entry name" value="NiRdtase/SiRdtase_haem-b_fer"/>
</dbReference>
<dbReference type="InterPro" id="IPR036136">
    <property type="entry name" value="Nit/Sulf_reduc_fer-like_dom_sf"/>
</dbReference>
<dbReference type="InterPro" id="IPR006067">
    <property type="entry name" value="NO2/SO3_Rdtase_4Fe4S_dom"/>
</dbReference>
<dbReference type="InterPro" id="IPR045169">
    <property type="entry name" value="NO2/SO3_Rdtase_4Fe4S_prot"/>
</dbReference>
<dbReference type="InterPro" id="IPR045854">
    <property type="entry name" value="NO2/SO3_Rdtase_4Fe4S_sf"/>
</dbReference>
<dbReference type="InterPro" id="IPR006066">
    <property type="entry name" value="NO2/SO3_Rdtase_FeS/sirohaem_BS"/>
</dbReference>
<dbReference type="NCBIfam" id="TIGR02041">
    <property type="entry name" value="CysI"/>
    <property type="match status" value="1"/>
</dbReference>
<dbReference type="NCBIfam" id="NF010029">
    <property type="entry name" value="PRK13504.1"/>
    <property type="match status" value="1"/>
</dbReference>
<dbReference type="PANTHER" id="PTHR11493:SF47">
    <property type="entry name" value="SULFITE REDUCTASE [NADPH] SUBUNIT BETA"/>
    <property type="match status" value="1"/>
</dbReference>
<dbReference type="PANTHER" id="PTHR11493">
    <property type="entry name" value="SULFITE REDUCTASE [NADPH] SUBUNIT BETA-RELATED"/>
    <property type="match status" value="1"/>
</dbReference>
<dbReference type="Pfam" id="PF01077">
    <property type="entry name" value="NIR_SIR"/>
    <property type="match status" value="1"/>
</dbReference>
<dbReference type="Pfam" id="PF03460">
    <property type="entry name" value="NIR_SIR_ferr"/>
    <property type="match status" value="2"/>
</dbReference>
<dbReference type="PRINTS" id="PR00397">
    <property type="entry name" value="SIROHAEM"/>
</dbReference>
<dbReference type="SUPFAM" id="SSF56014">
    <property type="entry name" value="Nitrite and sulphite reductase 4Fe-4S domain-like"/>
    <property type="match status" value="2"/>
</dbReference>
<dbReference type="SUPFAM" id="SSF55124">
    <property type="entry name" value="Nitrite/Sulfite reductase N-terminal domain-like"/>
    <property type="match status" value="2"/>
</dbReference>
<dbReference type="PROSITE" id="PS00365">
    <property type="entry name" value="NIR_SIR"/>
    <property type="match status" value="1"/>
</dbReference>
<evidence type="ECO:0000255" key="1">
    <source>
        <dbReference type="HAMAP-Rule" id="MF_01540"/>
    </source>
</evidence>
<accession>B6ELM5</accession>
<protein>
    <recommendedName>
        <fullName evidence="1">Sulfite reductase [NADPH] hemoprotein beta-component</fullName>
        <shortName evidence="1">SiR-HP</shortName>
        <shortName evidence="1">SiRHP</shortName>
        <ecNumber evidence="1">1.8.1.2</ecNumber>
    </recommendedName>
</protein>
<feature type="chain" id="PRO_1000146641" description="Sulfite reductase [NADPH] hemoprotein beta-component">
    <location>
        <begin position="1"/>
        <end position="576"/>
    </location>
</feature>
<feature type="binding site" evidence="1">
    <location>
        <position position="439"/>
    </location>
    <ligand>
        <name>[4Fe-4S] cluster</name>
        <dbReference type="ChEBI" id="CHEBI:49883"/>
    </ligand>
</feature>
<feature type="binding site" evidence="1">
    <location>
        <position position="445"/>
    </location>
    <ligand>
        <name>[4Fe-4S] cluster</name>
        <dbReference type="ChEBI" id="CHEBI:49883"/>
    </ligand>
</feature>
<feature type="binding site" evidence="1">
    <location>
        <position position="485"/>
    </location>
    <ligand>
        <name>[4Fe-4S] cluster</name>
        <dbReference type="ChEBI" id="CHEBI:49883"/>
    </ligand>
</feature>
<feature type="binding site" evidence="1">
    <location>
        <position position="489"/>
    </location>
    <ligand>
        <name>[4Fe-4S] cluster</name>
        <dbReference type="ChEBI" id="CHEBI:49883"/>
    </ligand>
</feature>
<feature type="binding site" description="axial binding residue" evidence="1">
    <location>
        <position position="489"/>
    </location>
    <ligand>
        <name>siroheme</name>
        <dbReference type="ChEBI" id="CHEBI:60052"/>
    </ligand>
    <ligandPart>
        <name>Fe</name>
        <dbReference type="ChEBI" id="CHEBI:18248"/>
    </ligandPart>
</feature>
<keyword id="KW-0004">4Fe-4S</keyword>
<keyword id="KW-0028">Amino-acid biosynthesis</keyword>
<keyword id="KW-0198">Cysteine biosynthesis</keyword>
<keyword id="KW-0349">Heme</keyword>
<keyword id="KW-0408">Iron</keyword>
<keyword id="KW-0411">Iron-sulfur</keyword>
<keyword id="KW-0479">Metal-binding</keyword>
<keyword id="KW-0521">NADP</keyword>
<keyword id="KW-0560">Oxidoreductase</keyword>
<name>CYSI_ALISL</name>